<sequence length="455" mass="50773">MPNPDTSTMTPREIVQELDRHIVGQHDAKRAVAIALRNRWRRMQLPEELRNEVMPKNILMIGPTGVGKTEIARRLATLANAPFVKVEATRFTEVGYVGKDVEQIIRDLADTSVKLYREQAKVRVRNQAEERAEDCILDALLPRRATGIGFDPEAARNEPSSQENDTRIKFRRMLRNGELDEREIELEVAVNASMDIMTPPGMEEMGQQLRQMFSNLGSGKSQKRKLTIKAARPLLIEEEAGKLVNEDDVRTAAIKACEQHGIVFIDEIDKVAKRGEAGSNGGDVSREGVQRDLLPLVEGSNVSTKYGTVKTDHILFIASGAFHLAKPSDLIPELQGRFPIRVELTALTKADFVRILTEPKAALIKQYEALLQTEGVSLTFAQDAVDRLAEIAAQVNERQENIGARRLHTVLERLLDVLSYEAPDRDGQSVTVDAAYVDAQLGELVQDPDLSRYIL</sequence>
<gene>
    <name evidence="1" type="primary">hslU</name>
    <name type="ordered locus">XOO3763</name>
</gene>
<comment type="function">
    <text evidence="1">ATPase subunit of a proteasome-like degradation complex; this subunit has chaperone activity. The binding of ATP and its subsequent hydrolysis by HslU are essential for unfolding of protein substrates subsequently hydrolyzed by HslV. HslU recognizes the N-terminal part of its protein substrates and unfolds these before they are guided to HslV for hydrolysis.</text>
</comment>
<comment type="subunit">
    <text evidence="1">A double ring-shaped homohexamer of HslV is capped on each side by a ring-shaped HslU homohexamer. The assembly of the HslU/HslV complex is dependent on binding of ATP.</text>
</comment>
<comment type="subcellular location">
    <subcellularLocation>
        <location evidence="1">Cytoplasm</location>
    </subcellularLocation>
</comment>
<comment type="similarity">
    <text evidence="1">Belongs to the ClpX chaperone family. HslU subfamily.</text>
</comment>
<evidence type="ECO:0000255" key="1">
    <source>
        <dbReference type="HAMAP-Rule" id="MF_00249"/>
    </source>
</evidence>
<dbReference type="EMBL" id="AP008229">
    <property type="protein sequence ID" value="BAE70518.1"/>
    <property type="molecule type" value="Genomic_DNA"/>
</dbReference>
<dbReference type="RefSeq" id="WP_011260359.1">
    <property type="nucleotide sequence ID" value="NC_007705.1"/>
</dbReference>
<dbReference type="SMR" id="Q2NYV9"/>
<dbReference type="KEGG" id="xom:XOO3763"/>
<dbReference type="HOGENOM" id="CLU_033123_0_0_6"/>
<dbReference type="GO" id="GO:0009376">
    <property type="term" value="C:HslUV protease complex"/>
    <property type="evidence" value="ECO:0007669"/>
    <property type="project" value="UniProtKB-UniRule"/>
</dbReference>
<dbReference type="GO" id="GO:0005524">
    <property type="term" value="F:ATP binding"/>
    <property type="evidence" value="ECO:0007669"/>
    <property type="project" value="UniProtKB-UniRule"/>
</dbReference>
<dbReference type="GO" id="GO:0016887">
    <property type="term" value="F:ATP hydrolysis activity"/>
    <property type="evidence" value="ECO:0007669"/>
    <property type="project" value="InterPro"/>
</dbReference>
<dbReference type="GO" id="GO:0008233">
    <property type="term" value="F:peptidase activity"/>
    <property type="evidence" value="ECO:0007669"/>
    <property type="project" value="InterPro"/>
</dbReference>
<dbReference type="GO" id="GO:0036402">
    <property type="term" value="F:proteasome-activating activity"/>
    <property type="evidence" value="ECO:0007669"/>
    <property type="project" value="UniProtKB-UniRule"/>
</dbReference>
<dbReference type="GO" id="GO:0043335">
    <property type="term" value="P:protein unfolding"/>
    <property type="evidence" value="ECO:0007669"/>
    <property type="project" value="UniProtKB-UniRule"/>
</dbReference>
<dbReference type="GO" id="GO:0051603">
    <property type="term" value="P:proteolysis involved in protein catabolic process"/>
    <property type="evidence" value="ECO:0007669"/>
    <property type="project" value="TreeGrafter"/>
</dbReference>
<dbReference type="CDD" id="cd19498">
    <property type="entry name" value="RecA-like_HslU"/>
    <property type="match status" value="1"/>
</dbReference>
<dbReference type="FunFam" id="3.40.50.300:FF:000213">
    <property type="entry name" value="ATP-dependent protease ATPase subunit HslU"/>
    <property type="match status" value="1"/>
</dbReference>
<dbReference type="FunFam" id="3.40.50.300:FF:000220">
    <property type="entry name" value="ATP-dependent protease ATPase subunit HslU"/>
    <property type="match status" value="1"/>
</dbReference>
<dbReference type="Gene3D" id="1.10.8.60">
    <property type="match status" value="1"/>
</dbReference>
<dbReference type="Gene3D" id="3.40.50.300">
    <property type="entry name" value="P-loop containing nucleotide triphosphate hydrolases"/>
    <property type="match status" value="2"/>
</dbReference>
<dbReference type="HAMAP" id="MF_00249">
    <property type="entry name" value="HslU"/>
    <property type="match status" value="1"/>
</dbReference>
<dbReference type="InterPro" id="IPR003593">
    <property type="entry name" value="AAA+_ATPase"/>
</dbReference>
<dbReference type="InterPro" id="IPR050052">
    <property type="entry name" value="ATP-dep_Clp_protease_ClpX"/>
</dbReference>
<dbReference type="InterPro" id="IPR003959">
    <property type="entry name" value="ATPase_AAA_core"/>
</dbReference>
<dbReference type="InterPro" id="IPR019489">
    <property type="entry name" value="Clp_ATPase_C"/>
</dbReference>
<dbReference type="InterPro" id="IPR004491">
    <property type="entry name" value="HslU"/>
</dbReference>
<dbReference type="InterPro" id="IPR027417">
    <property type="entry name" value="P-loop_NTPase"/>
</dbReference>
<dbReference type="NCBIfam" id="TIGR00390">
    <property type="entry name" value="hslU"/>
    <property type="match status" value="1"/>
</dbReference>
<dbReference type="NCBIfam" id="NF003544">
    <property type="entry name" value="PRK05201.1"/>
    <property type="match status" value="1"/>
</dbReference>
<dbReference type="PANTHER" id="PTHR48102">
    <property type="entry name" value="ATP-DEPENDENT CLP PROTEASE ATP-BINDING SUBUNIT CLPX-LIKE, MITOCHONDRIAL-RELATED"/>
    <property type="match status" value="1"/>
</dbReference>
<dbReference type="PANTHER" id="PTHR48102:SF3">
    <property type="entry name" value="ATP-DEPENDENT PROTEASE ATPASE SUBUNIT HSLU"/>
    <property type="match status" value="1"/>
</dbReference>
<dbReference type="Pfam" id="PF00004">
    <property type="entry name" value="AAA"/>
    <property type="match status" value="1"/>
</dbReference>
<dbReference type="Pfam" id="PF07724">
    <property type="entry name" value="AAA_2"/>
    <property type="match status" value="1"/>
</dbReference>
<dbReference type="SMART" id="SM00382">
    <property type="entry name" value="AAA"/>
    <property type="match status" value="1"/>
</dbReference>
<dbReference type="SMART" id="SM01086">
    <property type="entry name" value="ClpB_D2-small"/>
    <property type="match status" value="1"/>
</dbReference>
<dbReference type="SUPFAM" id="SSF52540">
    <property type="entry name" value="P-loop containing nucleoside triphosphate hydrolases"/>
    <property type="match status" value="1"/>
</dbReference>
<protein>
    <recommendedName>
        <fullName evidence="1">ATP-dependent protease ATPase subunit HslU</fullName>
    </recommendedName>
    <alternativeName>
        <fullName evidence="1">Unfoldase HslU</fullName>
    </alternativeName>
</protein>
<reference key="1">
    <citation type="journal article" date="2005" name="Jpn. Agric. Res. Q.">
        <title>Genome sequence of Xanthomonas oryzae pv. oryzae suggests contribution of large numbers of effector genes and insertion sequences to its race diversity.</title>
        <authorList>
            <person name="Ochiai H."/>
            <person name="Inoue Y."/>
            <person name="Takeya M."/>
            <person name="Sasaki A."/>
            <person name="Kaku H."/>
        </authorList>
    </citation>
    <scope>NUCLEOTIDE SEQUENCE [LARGE SCALE GENOMIC DNA]</scope>
    <source>
        <strain>MAFF 311018</strain>
    </source>
</reference>
<keyword id="KW-0067">ATP-binding</keyword>
<keyword id="KW-0143">Chaperone</keyword>
<keyword id="KW-0963">Cytoplasm</keyword>
<keyword id="KW-0547">Nucleotide-binding</keyword>
<feature type="chain" id="PRO_1000012830" description="ATP-dependent protease ATPase subunit HslU">
    <location>
        <begin position="1"/>
        <end position="455"/>
    </location>
</feature>
<feature type="binding site" evidence="1">
    <location>
        <position position="23"/>
    </location>
    <ligand>
        <name>ATP</name>
        <dbReference type="ChEBI" id="CHEBI:30616"/>
    </ligand>
</feature>
<feature type="binding site" evidence="1">
    <location>
        <begin position="65"/>
        <end position="70"/>
    </location>
    <ligand>
        <name>ATP</name>
        <dbReference type="ChEBI" id="CHEBI:30616"/>
    </ligand>
</feature>
<feature type="binding site" evidence="1">
    <location>
        <position position="266"/>
    </location>
    <ligand>
        <name>ATP</name>
        <dbReference type="ChEBI" id="CHEBI:30616"/>
    </ligand>
</feature>
<feature type="binding site" evidence="1">
    <location>
        <position position="333"/>
    </location>
    <ligand>
        <name>ATP</name>
        <dbReference type="ChEBI" id="CHEBI:30616"/>
    </ligand>
</feature>
<feature type="binding site" evidence="1">
    <location>
        <position position="405"/>
    </location>
    <ligand>
        <name>ATP</name>
        <dbReference type="ChEBI" id="CHEBI:30616"/>
    </ligand>
</feature>
<name>HSLU_XANOM</name>
<accession>Q2NYV9</accession>
<proteinExistence type="inferred from homology"/>
<organism>
    <name type="scientific">Xanthomonas oryzae pv. oryzae (strain MAFF 311018)</name>
    <dbReference type="NCBI Taxonomy" id="342109"/>
    <lineage>
        <taxon>Bacteria</taxon>
        <taxon>Pseudomonadati</taxon>
        <taxon>Pseudomonadota</taxon>
        <taxon>Gammaproteobacteria</taxon>
        <taxon>Lysobacterales</taxon>
        <taxon>Lysobacteraceae</taxon>
        <taxon>Xanthomonas</taxon>
    </lineage>
</organism>